<reference key="1">
    <citation type="journal article" date="2004" name="Proc. Natl. Acad. Sci. U.S.A.">
        <title>The complete genomic sequence of Nocardia farcinica IFM 10152.</title>
        <authorList>
            <person name="Ishikawa J."/>
            <person name="Yamashita A."/>
            <person name="Mikami Y."/>
            <person name="Hoshino Y."/>
            <person name="Kurita H."/>
            <person name="Hotta K."/>
            <person name="Shiba T."/>
            <person name="Hattori M."/>
        </authorList>
    </citation>
    <scope>NUCLEOTIDE SEQUENCE [LARGE SCALE GENOMIC DNA]</scope>
    <source>
        <strain>IFM 10152</strain>
    </source>
</reference>
<comment type="function">
    <text evidence="1">One of the primary rRNA binding proteins, it binds directly near the 3'-end of the 23S rRNA, where it nucleates assembly of the 50S subunit.</text>
</comment>
<comment type="subunit">
    <text evidence="1">Part of the 50S ribosomal subunit. Forms a cluster with proteins L14 and L19.</text>
</comment>
<comment type="similarity">
    <text evidence="1">Belongs to the universal ribosomal protein uL3 family.</text>
</comment>
<evidence type="ECO:0000255" key="1">
    <source>
        <dbReference type="HAMAP-Rule" id="MF_01325"/>
    </source>
</evidence>
<evidence type="ECO:0000305" key="2"/>
<name>RL3_NOCFA</name>
<keyword id="KW-1185">Reference proteome</keyword>
<keyword id="KW-0687">Ribonucleoprotein</keyword>
<keyword id="KW-0689">Ribosomal protein</keyword>
<keyword id="KW-0694">RNA-binding</keyword>
<keyword id="KW-0699">rRNA-binding</keyword>
<feature type="chain" id="PRO_0000241378" description="Large ribosomal subunit protein uL3">
    <location>
        <begin position="1"/>
        <end position="221"/>
    </location>
</feature>
<proteinExistence type="inferred from homology"/>
<dbReference type="EMBL" id="AP006618">
    <property type="protein sequence ID" value="BAD55578.1"/>
    <property type="molecule type" value="Genomic_DNA"/>
</dbReference>
<dbReference type="RefSeq" id="WP_011207264.1">
    <property type="nucleotide sequence ID" value="NC_006361.1"/>
</dbReference>
<dbReference type="SMR" id="Q5Z1W3"/>
<dbReference type="STRING" id="247156.NFA_7330"/>
<dbReference type="GeneID" id="61131564"/>
<dbReference type="KEGG" id="nfa:NFA_7330"/>
<dbReference type="eggNOG" id="COG0087">
    <property type="taxonomic scope" value="Bacteria"/>
</dbReference>
<dbReference type="HOGENOM" id="CLU_044142_4_1_11"/>
<dbReference type="OrthoDB" id="9806135at2"/>
<dbReference type="Proteomes" id="UP000006820">
    <property type="component" value="Chromosome"/>
</dbReference>
<dbReference type="GO" id="GO:0022625">
    <property type="term" value="C:cytosolic large ribosomal subunit"/>
    <property type="evidence" value="ECO:0007669"/>
    <property type="project" value="TreeGrafter"/>
</dbReference>
<dbReference type="GO" id="GO:0019843">
    <property type="term" value="F:rRNA binding"/>
    <property type="evidence" value="ECO:0007669"/>
    <property type="project" value="UniProtKB-UniRule"/>
</dbReference>
<dbReference type="GO" id="GO:0003735">
    <property type="term" value="F:structural constituent of ribosome"/>
    <property type="evidence" value="ECO:0007669"/>
    <property type="project" value="InterPro"/>
</dbReference>
<dbReference type="GO" id="GO:0006412">
    <property type="term" value="P:translation"/>
    <property type="evidence" value="ECO:0007669"/>
    <property type="project" value="UniProtKB-UniRule"/>
</dbReference>
<dbReference type="FunFam" id="2.40.30.10:FF:000004">
    <property type="entry name" value="50S ribosomal protein L3"/>
    <property type="match status" value="1"/>
</dbReference>
<dbReference type="FunFam" id="3.30.160.810:FF:000003">
    <property type="entry name" value="50S ribosomal protein L3"/>
    <property type="match status" value="1"/>
</dbReference>
<dbReference type="Gene3D" id="3.30.160.810">
    <property type="match status" value="1"/>
</dbReference>
<dbReference type="Gene3D" id="2.40.30.10">
    <property type="entry name" value="Translation factors"/>
    <property type="match status" value="1"/>
</dbReference>
<dbReference type="HAMAP" id="MF_01325_B">
    <property type="entry name" value="Ribosomal_uL3_B"/>
    <property type="match status" value="1"/>
</dbReference>
<dbReference type="InterPro" id="IPR000597">
    <property type="entry name" value="Ribosomal_uL3"/>
</dbReference>
<dbReference type="InterPro" id="IPR019927">
    <property type="entry name" value="Ribosomal_uL3_bac/org-type"/>
</dbReference>
<dbReference type="InterPro" id="IPR019926">
    <property type="entry name" value="Ribosomal_uL3_CS"/>
</dbReference>
<dbReference type="InterPro" id="IPR009000">
    <property type="entry name" value="Transl_B-barrel_sf"/>
</dbReference>
<dbReference type="NCBIfam" id="TIGR03625">
    <property type="entry name" value="L3_bact"/>
    <property type="match status" value="1"/>
</dbReference>
<dbReference type="PANTHER" id="PTHR11229">
    <property type="entry name" value="50S RIBOSOMAL PROTEIN L3"/>
    <property type="match status" value="1"/>
</dbReference>
<dbReference type="PANTHER" id="PTHR11229:SF16">
    <property type="entry name" value="LARGE RIBOSOMAL SUBUNIT PROTEIN UL3C"/>
    <property type="match status" value="1"/>
</dbReference>
<dbReference type="Pfam" id="PF00297">
    <property type="entry name" value="Ribosomal_L3"/>
    <property type="match status" value="1"/>
</dbReference>
<dbReference type="SUPFAM" id="SSF50447">
    <property type="entry name" value="Translation proteins"/>
    <property type="match status" value="1"/>
</dbReference>
<dbReference type="PROSITE" id="PS00474">
    <property type="entry name" value="RIBOSOMAL_L3"/>
    <property type="match status" value="1"/>
</dbReference>
<accession>Q5Z1W3</accession>
<organism>
    <name type="scientific">Nocardia farcinica (strain IFM 10152)</name>
    <dbReference type="NCBI Taxonomy" id="247156"/>
    <lineage>
        <taxon>Bacteria</taxon>
        <taxon>Bacillati</taxon>
        <taxon>Actinomycetota</taxon>
        <taxon>Actinomycetes</taxon>
        <taxon>Mycobacteriales</taxon>
        <taxon>Nocardiaceae</taxon>
        <taxon>Nocardia</taxon>
    </lineage>
</organism>
<protein>
    <recommendedName>
        <fullName evidence="1">Large ribosomal subunit protein uL3</fullName>
    </recommendedName>
    <alternativeName>
        <fullName evidence="2">50S ribosomal protein L3</fullName>
    </alternativeName>
</protein>
<gene>
    <name evidence="1" type="primary">rplC</name>
    <name type="ordered locus">NFA_7330</name>
</gene>
<sequence length="221" mass="23212">MTDNKNRPAAGILGTKLGMTQVFDEKNRVVPVTVIKAGPNVVTQIRTEERDGYSAVQVAFGAIDPRKVNKPVAGQFAKAGVTPRRHIAEIRVADASSFEVGQEINADVFEEGSYVDVTGTSKGKGYAGTMKRHGFRGQGASHGAQAVHRRPGSIGGCATPGRVFKGMRMAGRMGNDRVTTQNLSVHKVDAENGLLLIKGAIPGRKGGVVIVKSAVKGGAHA</sequence>